<feature type="chain" id="PRO_0000148721" description="Trk system potassium uptake protein TrkA">
    <location>
        <begin position="1"/>
        <end position="223"/>
    </location>
</feature>
<feature type="domain" description="RCK N-terminal" evidence="2">
    <location>
        <begin position="1"/>
        <end position="118"/>
    </location>
</feature>
<feature type="domain" description="RCK C-terminal" evidence="3">
    <location>
        <begin position="133"/>
        <end position="215"/>
    </location>
</feature>
<feature type="binding site" description="in other chain" evidence="1">
    <location>
        <begin position="7"/>
        <end position="11"/>
    </location>
    <ligand>
        <name>NAD(+)</name>
        <dbReference type="ChEBI" id="CHEBI:57540"/>
        <note>ligand shared between dimeric partners</note>
    </ligand>
</feature>
<feature type="binding site" description="in other chain" evidence="1">
    <location>
        <position position="30"/>
    </location>
    <ligand>
        <name>NAD(+)</name>
        <dbReference type="ChEBI" id="CHEBI:57540"/>
        <note>ligand shared between dimeric partners</note>
    </ligand>
</feature>
<feature type="binding site" description="in other chain" evidence="1">
    <location>
        <begin position="73"/>
        <end position="74"/>
    </location>
    <ligand>
        <name>NAD(+)</name>
        <dbReference type="ChEBI" id="CHEBI:57540"/>
        <note>ligand shared between dimeric partners</note>
    </ligand>
</feature>
<feature type="binding site" evidence="1">
    <location>
        <position position="98"/>
    </location>
    <ligand>
        <name>NAD(+)</name>
        <dbReference type="ChEBI" id="CHEBI:57540"/>
        <note>ligand shared between dimeric partners</note>
    </ligand>
</feature>
<evidence type="ECO:0000250" key="1"/>
<evidence type="ECO:0000255" key="2">
    <source>
        <dbReference type="PROSITE-ProRule" id="PRU00543"/>
    </source>
</evidence>
<evidence type="ECO:0000255" key="3">
    <source>
        <dbReference type="PROSITE-ProRule" id="PRU00544"/>
    </source>
</evidence>
<gene>
    <name type="primary">trkA</name>
    <name type="ordered locus">SCO5876</name>
    <name type="ORF">SC2E9.17c</name>
</gene>
<keyword id="KW-0406">Ion transport</keyword>
<keyword id="KW-0520">NAD</keyword>
<keyword id="KW-0630">Potassium</keyword>
<keyword id="KW-0633">Potassium transport</keyword>
<keyword id="KW-1185">Reference proteome</keyword>
<keyword id="KW-0813">Transport</keyword>
<proteinExistence type="inferred from homology"/>
<sequence>MHIVIMGCGRVGSALAQALEQQGHTVAVIDRDPTSFRRLGSSFGGRRVTGIGFDQDTLREAGIEEAGAFAAVSSGDNSNIIAARVAREMFGVENVAARIYDPRRAEVYQRLGIPTVATVRWTADQMLRRLLPSGAEPLWRDPTGGVQLAEVHTSSSWVGHKISRLQEETGVRVAFVTRLGEAILPSSQTVLQEGDLVHVMMRTDEVHKVEAAFAKGPEEEGGH</sequence>
<dbReference type="EMBL" id="AL939125">
    <property type="protein sequence ID" value="CAA16485.1"/>
    <property type="molecule type" value="Genomic_DNA"/>
</dbReference>
<dbReference type="EMBL" id="M29790">
    <property type="protein sequence ID" value="AAA88557.1"/>
    <property type="molecule type" value="Genomic_DNA"/>
</dbReference>
<dbReference type="PIR" id="T34828">
    <property type="entry name" value="T34828"/>
</dbReference>
<dbReference type="RefSeq" id="NP_629998.1">
    <property type="nucleotide sequence ID" value="NC_003888.3"/>
</dbReference>
<dbReference type="RefSeq" id="WP_003973145.1">
    <property type="nucleotide sequence ID" value="NZ_VNID01000007.1"/>
</dbReference>
<dbReference type="SMR" id="Q53949"/>
<dbReference type="FunCoup" id="Q53949">
    <property type="interactions" value="1"/>
</dbReference>
<dbReference type="STRING" id="100226.gene:17763536"/>
<dbReference type="PaxDb" id="100226-SCO5876"/>
<dbReference type="KEGG" id="sco:SCO5876"/>
<dbReference type="PATRIC" id="fig|100226.15.peg.5975"/>
<dbReference type="eggNOG" id="COG0569">
    <property type="taxonomic scope" value="Bacteria"/>
</dbReference>
<dbReference type="HOGENOM" id="CLU_046525_2_4_11"/>
<dbReference type="InParanoid" id="Q53949"/>
<dbReference type="OrthoDB" id="3208998at2"/>
<dbReference type="PhylomeDB" id="Q53949"/>
<dbReference type="Proteomes" id="UP000001973">
    <property type="component" value="Chromosome"/>
</dbReference>
<dbReference type="GO" id="GO:0005886">
    <property type="term" value="C:plasma membrane"/>
    <property type="evidence" value="ECO:0007669"/>
    <property type="project" value="InterPro"/>
</dbReference>
<dbReference type="GO" id="GO:0015079">
    <property type="term" value="F:potassium ion transmembrane transporter activity"/>
    <property type="evidence" value="ECO:0007669"/>
    <property type="project" value="InterPro"/>
</dbReference>
<dbReference type="Gene3D" id="3.40.50.720">
    <property type="entry name" value="NAD(P)-binding Rossmann-like Domain"/>
    <property type="match status" value="1"/>
</dbReference>
<dbReference type="Gene3D" id="3.30.70.1450">
    <property type="entry name" value="Regulator of K+ conductance, C-terminal domain"/>
    <property type="match status" value="1"/>
</dbReference>
<dbReference type="InterPro" id="IPR006036">
    <property type="entry name" value="K_uptake_TrkA"/>
</dbReference>
<dbReference type="InterPro" id="IPR036291">
    <property type="entry name" value="NAD(P)-bd_dom_sf"/>
</dbReference>
<dbReference type="InterPro" id="IPR006037">
    <property type="entry name" value="RCK_C"/>
</dbReference>
<dbReference type="InterPro" id="IPR036721">
    <property type="entry name" value="RCK_C_sf"/>
</dbReference>
<dbReference type="InterPro" id="IPR003148">
    <property type="entry name" value="RCK_N"/>
</dbReference>
<dbReference type="InterPro" id="IPR050721">
    <property type="entry name" value="Trk_Ktr_HKT_K-transport"/>
</dbReference>
<dbReference type="PANTHER" id="PTHR43833">
    <property type="entry name" value="POTASSIUM CHANNEL PROTEIN 2-RELATED-RELATED"/>
    <property type="match status" value="1"/>
</dbReference>
<dbReference type="PANTHER" id="PTHR43833:SF8">
    <property type="entry name" value="TRK SYSTEM POTASSIUM UPTAKE PROTEIN TRKA"/>
    <property type="match status" value="1"/>
</dbReference>
<dbReference type="Pfam" id="PF02080">
    <property type="entry name" value="TrkA_C"/>
    <property type="match status" value="1"/>
</dbReference>
<dbReference type="Pfam" id="PF02254">
    <property type="entry name" value="TrkA_N"/>
    <property type="match status" value="1"/>
</dbReference>
<dbReference type="PRINTS" id="PR00335">
    <property type="entry name" value="KUPTAKETRKA"/>
</dbReference>
<dbReference type="SUPFAM" id="SSF51735">
    <property type="entry name" value="NAD(P)-binding Rossmann-fold domains"/>
    <property type="match status" value="1"/>
</dbReference>
<dbReference type="SUPFAM" id="SSF116726">
    <property type="entry name" value="TrkA C-terminal domain-like"/>
    <property type="match status" value="1"/>
</dbReference>
<dbReference type="PROSITE" id="PS51202">
    <property type="entry name" value="RCK_C"/>
    <property type="match status" value="1"/>
</dbReference>
<dbReference type="PROSITE" id="PS51201">
    <property type="entry name" value="RCK_N"/>
    <property type="match status" value="1"/>
</dbReference>
<protein>
    <recommendedName>
        <fullName>Trk system potassium uptake protein TrkA</fullName>
        <shortName>K(+)-uptake protein TrkA</shortName>
    </recommendedName>
</protein>
<organism>
    <name type="scientific">Streptomyces coelicolor (strain ATCC BAA-471 / A3(2) / M145)</name>
    <dbReference type="NCBI Taxonomy" id="100226"/>
    <lineage>
        <taxon>Bacteria</taxon>
        <taxon>Bacillati</taxon>
        <taxon>Actinomycetota</taxon>
        <taxon>Actinomycetes</taxon>
        <taxon>Kitasatosporales</taxon>
        <taxon>Streptomycetaceae</taxon>
        <taxon>Streptomyces</taxon>
        <taxon>Streptomyces albidoflavus group</taxon>
    </lineage>
</organism>
<accession>Q53949</accession>
<name>TRKA_STRCO</name>
<reference key="1">
    <citation type="journal article" date="2002" name="Nature">
        <title>Complete genome sequence of the model actinomycete Streptomyces coelicolor A3(2).</title>
        <authorList>
            <person name="Bentley S.D."/>
            <person name="Chater K.F."/>
            <person name="Cerdeno-Tarraga A.-M."/>
            <person name="Challis G.L."/>
            <person name="Thomson N.R."/>
            <person name="James K.D."/>
            <person name="Harris D.E."/>
            <person name="Quail M.A."/>
            <person name="Kieser H."/>
            <person name="Harper D."/>
            <person name="Bateman A."/>
            <person name="Brown S."/>
            <person name="Chandra G."/>
            <person name="Chen C.W."/>
            <person name="Collins M."/>
            <person name="Cronin A."/>
            <person name="Fraser A."/>
            <person name="Goble A."/>
            <person name="Hidalgo J."/>
            <person name="Hornsby T."/>
            <person name="Howarth S."/>
            <person name="Huang C.-H."/>
            <person name="Kieser T."/>
            <person name="Larke L."/>
            <person name="Murphy L.D."/>
            <person name="Oliver K."/>
            <person name="O'Neil S."/>
            <person name="Rabbinowitsch E."/>
            <person name="Rajandream M.A."/>
            <person name="Rutherford K.M."/>
            <person name="Rutter S."/>
            <person name="Seeger K."/>
            <person name="Saunders D."/>
            <person name="Sharp S."/>
            <person name="Squares R."/>
            <person name="Squares S."/>
            <person name="Taylor K."/>
            <person name="Warren T."/>
            <person name="Wietzorrek A."/>
            <person name="Woodward J.R."/>
            <person name="Barrell B.G."/>
            <person name="Parkhill J."/>
            <person name="Hopwood D.A."/>
        </authorList>
    </citation>
    <scope>NUCLEOTIDE SEQUENCE [LARGE SCALE GENOMIC DNA]</scope>
    <source>
        <strain>ATCC BAA-471 / A3(2) / M145</strain>
    </source>
</reference>
<reference key="2">
    <citation type="journal article" date="1990" name="J. Bacteriol.">
        <title>Nucleotide sequence and transcriptional analysis of the redD locus of Streptomyces coelicolor A3(2).</title>
        <authorList>
            <person name="Narva K.E."/>
            <person name="Feitelson J.S."/>
        </authorList>
    </citation>
    <scope>NUCLEOTIDE SEQUENCE [GENOMIC DNA] OF 1-183</scope>
    <source>
        <strain>A3(2) / NRRL B-16638</strain>
    </source>
</reference>
<comment type="function">
    <text evidence="1">Part of a potassium transport system.</text>
</comment>
<comment type="domain">
    <text evidence="1">The RCK N-terminal domain binds NAD and possibly other effectors. This is expected to cause a conformation change that regulates potassium transport (By similarity).</text>
</comment>